<name>UBC9_YEAST</name>
<organism>
    <name type="scientific">Saccharomyces cerevisiae (strain ATCC 204508 / S288c)</name>
    <name type="common">Baker's yeast</name>
    <dbReference type="NCBI Taxonomy" id="559292"/>
    <lineage>
        <taxon>Eukaryota</taxon>
        <taxon>Fungi</taxon>
        <taxon>Dikarya</taxon>
        <taxon>Ascomycota</taxon>
        <taxon>Saccharomycotina</taxon>
        <taxon>Saccharomycetes</taxon>
        <taxon>Saccharomycetales</taxon>
        <taxon>Saccharomycetaceae</taxon>
        <taxon>Saccharomyces</taxon>
    </lineage>
</organism>
<keyword id="KW-0002">3D-structure</keyword>
<keyword id="KW-0007">Acetylation</keyword>
<keyword id="KW-0067">ATP-binding</keyword>
<keyword id="KW-0131">Cell cycle</keyword>
<keyword id="KW-0132">Cell division</keyword>
<keyword id="KW-0498">Mitosis</keyword>
<keyword id="KW-0547">Nucleotide-binding</keyword>
<keyword id="KW-0539">Nucleus</keyword>
<keyword id="KW-1185">Reference proteome</keyword>
<keyword id="KW-0808">Transferase</keyword>
<keyword id="KW-0833">Ubl conjugation pathway</keyword>
<proteinExistence type="evidence at protein level"/>
<reference key="1">
    <citation type="journal article" date="1995" name="Nature">
        <title>Role of a ubiquitin-conjugating enzyme in degradation of S- and M-phase cyclins.</title>
        <authorList>
            <person name="Seufert W."/>
            <person name="Futcher B."/>
            <person name="Jentsch S."/>
        </authorList>
    </citation>
    <scope>NUCLEOTIDE SEQUENCE [GENOMIC DNA]</scope>
</reference>
<reference key="2">
    <citation type="journal article" date="1997" name="Nature">
        <title>The nucleotide sequence of Saccharomyces cerevisiae chromosome IV.</title>
        <authorList>
            <person name="Jacq C."/>
            <person name="Alt-Moerbe J."/>
            <person name="Andre B."/>
            <person name="Arnold W."/>
            <person name="Bahr A."/>
            <person name="Ballesta J.P.G."/>
            <person name="Bargues M."/>
            <person name="Baron L."/>
            <person name="Becker A."/>
            <person name="Biteau N."/>
            <person name="Bloecker H."/>
            <person name="Blugeon C."/>
            <person name="Boskovic J."/>
            <person name="Brandt P."/>
            <person name="Brueckner M."/>
            <person name="Buitrago M.J."/>
            <person name="Coster F."/>
            <person name="Delaveau T."/>
            <person name="del Rey F."/>
            <person name="Dujon B."/>
            <person name="Eide L.G."/>
            <person name="Garcia-Cantalejo J.M."/>
            <person name="Goffeau A."/>
            <person name="Gomez-Peris A."/>
            <person name="Granotier C."/>
            <person name="Hanemann V."/>
            <person name="Hankeln T."/>
            <person name="Hoheisel J.D."/>
            <person name="Jaeger W."/>
            <person name="Jimenez A."/>
            <person name="Jonniaux J.-L."/>
            <person name="Kraemer C."/>
            <person name="Kuester H."/>
            <person name="Laamanen P."/>
            <person name="Legros Y."/>
            <person name="Louis E.J."/>
            <person name="Moeller-Rieker S."/>
            <person name="Monnet A."/>
            <person name="Moro M."/>
            <person name="Mueller-Auer S."/>
            <person name="Nussbaumer B."/>
            <person name="Paricio N."/>
            <person name="Paulin L."/>
            <person name="Perea J."/>
            <person name="Perez-Alonso M."/>
            <person name="Perez-Ortin J.E."/>
            <person name="Pohl T.M."/>
            <person name="Prydz H."/>
            <person name="Purnelle B."/>
            <person name="Rasmussen S.W."/>
            <person name="Remacha M.A."/>
            <person name="Revuelta J.L."/>
            <person name="Rieger M."/>
            <person name="Salom D."/>
            <person name="Saluz H.P."/>
            <person name="Saiz J.E."/>
            <person name="Saren A.-M."/>
            <person name="Schaefer M."/>
            <person name="Scharfe M."/>
            <person name="Schmidt E.R."/>
            <person name="Schneider C."/>
            <person name="Scholler P."/>
            <person name="Schwarz S."/>
            <person name="Soler-Mira A."/>
            <person name="Urrestarazu L.A."/>
            <person name="Verhasselt P."/>
            <person name="Vissers S."/>
            <person name="Voet M."/>
            <person name="Volckaert G."/>
            <person name="Wagner G."/>
            <person name="Wambutt R."/>
            <person name="Wedler E."/>
            <person name="Wedler H."/>
            <person name="Woelfl S."/>
            <person name="Harris D.E."/>
            <person name="Bowman S."/>
            <person name="Brown D."/>
            <person name="Churcher C.M."/>
            <person name="Connor R."/>
            <person name="Dedman K."/>
            <person name="Gentles S."/>
            <person name="Hamlin N."/>
            <person name="Hunt S."/>
            <person name="Jones L."/>
            <person name="McDonald S."/>
            <person name="Murphy L.D."/>
            <person name="Niblett D."/>
            <person name="Odell C."/>
            <person name="Oliver K."/>
            <person name="Rajandream M.A."/>
            <person name="Richards C."/>
            <person name="Shore L."/>
            <person name="Walsh S.V."/>
            <person name="Barrell B.G."/>
            <person name="Dietrich F.S."/>
            <person name="Mulligan J.T."/>
            <person name="Allen E."/>
            <person name="Araujo R."/>
            <person name="Aviles E."/>
            <person name="Berno A."/>
            <person name="Carpenter J."/>
            <person name="Chen E."/>
            <person name="Cherry J.M."/>
            <person name="Chung E."/>
            <person name="Duncan M."/>
            <person name="Hunicke-Smith S."/>
            <person name="Hyman R.W."/>
            <person name="Komp C."/>
            <person name="Lashkari D."/>
            <person name="Lew H."/>
            <person name="Lin D."/>
            <person name="Mosedale D."/>
            <person name="Nakahara K."/>
            <person name="Namath A."/>
            <person name="Oefner P."/>
            <person name="Oh C."/>
            <person name="Petel F.X."/>
            <person name="Roberts D."/>
            <person name="Schramm S."/>
            <person name="Schroeder M."/>
            <person name="Shogren T."/>
            <person name="Shroff N."/>
            <person name="Winant A."/>
            <person name="Yelton M.A."/>
            <person name="Botstein D."/>
            <person name="Davis R.W."/>
            <person name="Johnston M."/>
            <person name="Andrews S."/>
            <person name="Brinkman R."/>
            <person name="Cooper J."/>
            <person name="Ding H."/>
            <person name="Du Z."/>
            <person name="Favello A."/>
            <person name="Fulton L."/>
            <person name="Gattung S."/>
            <person name="Greco T."/>
            <person name="Hallsworth K."/>
            <person name="Hawkins J."/>
            <person name="Hillier L.W."/>
            <person name="Jier M."/>
            <person name="Johnson D."/>
            <person name="Johnston L."/>
            <person name="Kirsten J."/>
            <person name="Kucaba T."/>
            <person name="Langston Y."/>
            <person name="Latreille P."/>
            <person name="Le T."/>
            <person name="Mardis E."/>
            <person name="Menezes S."/>
            <person name="Miller N."/>
            <person name="Nhan M."/>
            <person name="Pauley A."/>
            <person name="Peluso D."/>
            <person name="Rifkin L."/>
            <person name="Riles L."/>
            <person name="Taich A."/>
            <person name="Trevaskis E."/>
            <person name="Vignati D."/>
            <person name="Wilcox L."/>
            <person name="Wohldman P."/>
            <person name="Vaudin M."/>
            <person name="Wilson R."/>
            <person name="Waterston R."/>
            <person name="Albermann K."/>
            <person name="Hani J."/>
            <person name="Heumann K."/>
            <person name="Kleine K."/>
            <person name="Mewes H.-W."/>
            <person name="Zollner A."/>
            <person name="Zaccaria P."/>
        </authorList>
    </citation>
    <scope>NUCLEOTIDE SEQUENCE [LARGE SCALE GENOMIC DNA]</scope>
    <source>
        <strain>ATCC 204508 / S288c</strain>
    </source>
</reference>
<reference key="3">
    <citation type="journal article" date="2014" name="G3 (Bethesda)">
        <title>The reference genome sequence of Saccharomyces cerevisiae: Then and now.</title>
        <authorList>
            <person name="Engel S.R."/>
            <person name="Dietrich F.S."/>
            <person name="Fisk D.G."/>
            <person name="Binkley G."/>
            <person name="Balakrishnan R."/>
            <person name="Costanzo M.C."/>
            <person name="Dwight S.S."/>
            <person name="Hitz B.C."/>
            <person name="Karra K."/>
            <person name="Nash R.S."/>
            <person name="Weng S."/>
            <person name="Wong E.D."/>
            <person name="Lloyd P."/>
            <person name="Skrzypek M.S."/>
            <person name="Miyasato S.R."/>
            <person name="Simison M."/>
            <person name="Cherry J.M."/>
        </authorList>
    </citation>
    <scope>GENOME REANNOTATION</scope>
    <source>
        <strain>ATCC 204508 / S288c</strain>
    </source>
</reference>
<reference key="4">
    <citation type="journal article" date="1997" name="J. Biol. Chem.">
        <title>Ubc9p is the conjugating enzyme for the ubiquitin-like protein Smt3p.</title>
        <authorList>
            <person name="Johnson E.S."/>
            <person name="Blobel G."/>
        </authorList>
    </citation>
    <scope>FUNCTION</scope>
</reference>
<reference key="5">
    <citation type="journal article" date="2001" name="Cell">
        <title>An E3-like factor that promotes SUMO conjugation to the yeast septins.</title>
        <authorList>
            <person name="Johnson E.S."/>
            <person name="Gupta A.A."/>
        </authorList>
    </citation>
    <scope>INTERACTION WITH SIZ1</scope>
    <scope>FUNCTION</scope>
</reference>
<reference key="6">
    <citation type="journal article" date="2001" name="Gene">
        <title>A novel factor required for the SUMO1/Smt3 conjugation of yeast septins.</title>
        <authorList>
            <person name="Takahashi Y."/>
            <person name="Toh-e A."/>
            <person name="Kikuchi Y."/>
        </authorList>
    </citation>
    <scope>INTERACTION WITH SIZ1</scope>
</reference>
<reference key="7">
    <citation type="journal article" date="2003" name="Nature">
        <title>Global analysis of protein localization in budding yeast.</title>
        <authorList>
            <person name="Huh W.-K."/>
            <person name="Falvo J.V."/>
            <person name="Gerke L.C."/>
            <person name="Carroll A.S."/>
            <person name="Howson R.W."/>
            <person name="Weissman J.S."/>
            <person name="O'Shea E.K."/>
        </authorList>
    </citation>
    <scope>SUBCELLULAR LOCATION [LARGE SCALE ANALYSIS]</scope>
</reference>
<reference key="8">
    <citation type="journal article" date="2003" name="Nature">
        <title>Global analysis of protein expression in yeast.</title>
        <authorList>
            <person name="Ghaemmaghami S."/>
            <person name="Huh W.-K."/>
            <person name="Bower K."/>
            <person name="Howson R.W."/>
            <person name="Belle A."/>
            <person name="Dephoure N."/>
            <person name="O'Shea E.K."/>
            <person name="Weissman J.S."/>
        </authorList>
    </citation>
    <scope>LEVEL OF PROTEIN EXPRESSION [LARGE SCALE ANALYSIS]</scope>
</reference>
<reference key="9">
    <citation type="journal article" date="2012" name="Proc. Natl. Acad. Sci. U.S.A.">
        <title>N-terminal acetylome analyses and functional insights of the N-terminal acetyltransferase NatB.</title>
        <authorList>
            <person name="Van Damme P."/>
            <person name="Lasa M."/>
            <person name="Polevoda B."/>
            <person name="Gazquez C."/>
            <person name="Elosegui-Artola A."/>
            <person name="Kim D.S."/>
            <person name="De Juan-Pardo E."/>
            <person name="Demeyer K."/>
            <person name="Hole K."/>
            <person name="Larrea E."/>
            <person name="Timmerman E."/>
            <person name="Prieto J."/>
            <person name="Arnesen T."/>
            <person name="Sherman F."/>
            <person name="Gevaert K."/>
            <person name="Aldabe R."/>
        </authorList>
    </citation>
    <scope>ACETYLATION [LARGE SCALE ANALYSIS] AT SER-2</scope>
    <scope>CLEAVAGE OF INITIATOR METHIONINE [LARGE SCALE ANALYSIS]</scope>
    <scope>IDENTIFICATION BY MASS SPECTROMETRY [LARGE SCALE ANALYSIS]</scope>
</reference>
<gene>
    <name type="primary">UBC9</name>
    <name type="ordered locus">YDL064W</name>
</gene>
<protein>
    <recommendedName>
        <fullName>SUMO-conjugating enzyme UBC9</fullName>
        <ecNumber>2.3.2.-</ecNumber>
    </recommendedName>
    <alternativeName>
        <fullName>RING-type E3 SUMO transferase UBC9</fullName>
    </alternativeName>
    <alternativeName>
        <fullName>Ubiquitin carrier protein 9</fullName>
    </alternativeName>
    <alternativeName>
        <fullName>Ubiquitin-conjugating enzyme E2-18 kDa</fullName>
    </alternativeName>
    <alternativeName>
        <fullName>Ubiquitin-protein ligase</fullName>
    </alternativeName>
</protein>
<accession>P50623</accession>
<accession>D6VRT3</accession>
<evidence type="ECO:0000255" key="1">
    <source>
        <dbReference type="PROSITE-ProRule" id="PRU00388"/>
    </source>
</evidence>
<evidence type="ECO:0000255" key="2">
    <source>
        <dbReference type="PROSITE-ProRule" id="PRU10133"/>
    </source>
</evidence>
<evidence type="ECO:0000269" key="3">
    <source>
    </source>
</evidence>
<evidence type="ECO:0000269" key="4">
    <source>
    </source>
</evidence>
<evidence type="ECO:0000269" key="5">
    <source>
    </source>
</evidence>
<evidence type="ECO:0000269" key="6">
    <source>
    </source>
</evidence>
<evidence type="ECO:0000269" key="7">
    <source>
    </source>
</evidence>
<evidence type="ECO:0007744" key="8">
    <source>
    </source>
</evidence>
<evidence type="ECO:0007829" key="9">
    <source>
        <dbReference type="PDB" id="2GJD"/>
    </source>
</evidence>
<sequence>MSSLCLQRLQEERKKWRKDHPFGFYAKPVKKADGSMDLQKWEAGIPGKEGTNWAGGVYPITVEYPNEYPSKPPKVKFPAGFYHPNVYPSGTICLSILNEDQDWRPAITLKQIVLGVQDLLDSPNPNSPAQEPAWRSFSRNKAEYDKKVLLQAKQYSK</sequence>
<feature type="initiator methionine" description="Removed" evidence="8">
    <location>
        <position position="1"/>
    </location>
</feature>
<feature type="chain" id="PRO_0000082556" description="SUMO-conjugating enzyme UBC9">
    <location>
        <begin position="2"/>
        <end position="157"/>
    </location>
</feature>
<feature type="domain" description="UBC core" evidence="1">
    <location>
        <begin position="4"/>
        <end position="157"/>
    </location>
</feature>
<feature type="active site" description="Glycyl thioester intermediate" evidence="1 2">
    <location>
        <position position="93"/>
    </location>
</feature>
<feature type="modified residue" description="N-acetylserine" evidence="8">
    <location>
        <position position="2"/>
    </location>
</feature>
<feature type="helix" evidence="9">
    <location>
        <begin position="4"/>
        <end position="18"/>
    </location>
</feature>
<feature type="strand" evidence="9">
    <location>
        <begin position="25"/>
        <end position="30"/>
    </location>
</feature>
<feature type="strand" evidence="9">
    <location>
        <begin position="36"/>
        <end position="46"/>
    </location>
</feature>
<feature type="turn" evidence="9">
    <location>
        <begin position="52"/>
        <end position="55"/>
    </location>
</feature>
<feature type="strand" evidence="9">
    <location>
        <begin position="56"/>
        <end position="63"/>
    </location>
</feature>
<feature type="turn" evidence="9">
    <location>
        <begin position="66"/>
        <end position="70"/>
    </location>
</feature>
<feature type="strand" evidence="9">
    <location>
        <begin position="74"/>
        <end position="76"/>
    </location>
</feature>
<feature type="strand" evidence="9">
    <location>
        <begin position="90"/>
        <end position="92"/>
    </location>
</feature>
<feature type="helix" evidence="9">
    <location>
        <begin position="95"/>
        <end position="97"/>
    </location>
</feature>
<feature type="turn" evidence="9">
    <location>
        <begin position="99"/>
        <end position="102"/>
    </location>
</feature>
<feature type="helix" evidence="9">
    <location>
        <begin position="109"/>
        <end position="120"/>
    </location>
</feature>
<feature type="helix" evidence="9">
    <location>
        <begin position="131"/>
        <end position="139"/>
    </location>
</feature>
<feature type="helix" evidence="9">
    <location>
        <begin position="141"/>
        <end position="154"/>
    </location>
</feature>
<comment type="function">
    <text evidence="3 7">E2 ubiquitin-like--protein ligase mediating SUMO/Smt3 attachment to septins and PCNA. Seems to be involved in degradation of S- (CLB5) and M-phase cyclins (CLB2).</text>
</comment>
<comment type="pathway">
    <text>Protein modification; protein sumoylation.</text>
</comment>
<comment type="subunit">
    <text evidence="3 4">Interacts with SIZ1.</text>
</comment>
<comment type="interaction">
    <interactant intactId="EBI-19760">
        <id>P50623</id>
    </interactant>
    <interactant intactId="EBI-17490">
        <id>Q12306</id>
        <label>SMT3</label>
    </interactant>
    <organismsDiffer>false</organismsDiffer>
    <experiments>4</experiments>
</comment>
<comment type="subcellular location">
    <subcellularLocation>
        <location evidence="5">Nucleus</location>
    </subcellularLocation>
</comment>
<comment type="miscellaneous">
    <text evidence="6">Present with 2600 molecules/cell in log phase SD medium.</text>
</comment>
<comment type="similarity">
    <text evidence="1">Belongs to the ubiquitin-conjugating enzyme family.</text>
</comment>
<dbReference type="EC" id="2.3.2.-"/>
<dbReference type="EMBL" id="X82538">
    <property type="protein sequence ID" value="CAA57888.1"/>
    <property type="molecule type" value="Genomic_DNA"/>
</dbReference>
<dbReference type="EMBL" id="Z74112">
    <property type="protein sequence ID" value="CAA98629.1"/>
    <property type="molecule type" value="Genomic_DNA"/>
</dbReference>
<dbReference type="EMBL" id="BK006938">
    <property type="protein sequence ID" value="DAA11793.1"/>
    <property type="molecule type" value="Genomic_DNA"/>
</dbReference>
<dbReference type="PIR" id="S52414">
    <property type="entry name" value="S52414"/>
</dbReference>
<dbReference type="RefSeq" id="NP_010219.1">
    <property type="nucleotide sequence ID" value="NM_001180123.1"/>
</dbReference>
<dbReference type="PDB" id="2EKE">
    <property type="method" value="X-ray"/>
    <property type="resolution" value="1.90 A"/>
    <property type="chains" value="A/B=1-157"/>
</dbReference>
<dbReference type="PDB" id="2GJD">
    <property type="method" value="X-ray"/>
    <property type="resolution" value="1.75 A"/>
    <property type="chains" value="A/B/C/D=1-157"/>
</dbReference>
<dbReference type="PDB" id="3ONG">
    <property type="method" value="X-ray"/>
    <property type="resolution" value="2.30 A"/>
    <property type="chains" value="B/D=1-157"/>
</dbReference>
<dbReference type="PDB" id="5JNE">
    <property type="method" value="X-ray"/>
    <property type="resolution" value="2.85 A"/>
    <property type="chains" value="B/F=1-157"/>
</dbReference>
<dbReference type="PDB" id="6Q83">
    <property type="method" value="X-ray"/>
    <property type="resolution" value="4.53 A"/>
    <property type="chains" value="B=2-157"/>
</dbReference>
<dbReference type="PDB" id="7P47">
    <property type="method" value="X-ray"/>
    <property type="resolution" value="3.31 A"/>
    <property type="chains" value="C=1-157"/>
</dbReference>
<dbReference type="PDBsum" id="2EKE"/>
<dbReference type="PDBsum" id="2GJD"/>
<dbReference type="PDBsum" id="3ONG"/>
<dbReference type="PDBsum" id="5JNE"/>
<dbReference type="PDBsum" id="6Q83"/>
<dbReference type="PDBsum" id="7P47"/>
<dbReference type="SMR" id="P50623"/>
<dbReference type="BioGRID" id="31995">
    <property type="interactions" value="298"/>
</dbReference>
<dbReference type="DIP" id="DIP-1531N"/>
<dbReference type="FunCoup" id="P50623">
    <property type="interactions" value="1458"/>
</dbReference>
<dbReference type="IntAct" id="P50623">
    <property type="interactions" value="8"/>
</dbReference>
<dbReference type="MINT" id="P50623"/>
<dbReference type="STRING" id="4932.YDL064W"/>
<dbReference type="iPTMnet" id="P50623"/>
<dbReference type="PaxDb" id="4932-YDL064W"/>
<dbReference type="PeptideAtlas" id="P50623"/>
<dbReference type="EnsemblFungi" id="YDL064W_mRNA">
    <property type="protein sequence ID" value="YDL064W"/>
    <property type="gene ID" value="YDL064W"/>
</dbReference>
<dbReference type="GeneID" id="851495"/>
<dbReference type="KEGG" id="sce:YDL064W"/>
<dbReference type="AGR" id="SGD:S000002222"/>
<dbReference type="SGD" id="S000002222">
    <property type="gene designation" value="UBC9"/>
</dbReference>
<dbReference type="VEuPathDB" id="FungiDB:YDL064W"/>
<dbReference type="eggNOG" id="KOG0424">
    <property type="taxonomic scope" value="Eukaryota"/>
</dbReference>
<dbReference type="GeneTree" id="ENSGT00550000075088"/>
<dbReference type="HOGENOM" id="CLU_030988_12_0_1"/>
<dbReference type="InParanoid" id="P50623"/>
<dbReference type="OMA" id="TWECGIP"/>
<dbReference type="OrthoDB" id="6600758at2759"/>
<dbReference type="BioCyc" id="YEAST:G3O-29479-MONOMER"/>
<dbReference type="BRENDA" id="2.3.2.23">
    <property type="organism ID" value="984"/>
</dbReference>
<dbReference type="Reactome" id="R-SCE-3065678">
    <property type="pathway name" value="SUMO is transferred from E1 to E2 (UBE2I, UBC9)"/>
</dbReference>
<dbReference type="Reactome" id="R-SCE-3108214">
    <property type="pathway name" value="SUMOylation of DNA damage response and repair proteins"/>
</dbReference>
<dbReference type="Reactome" id="R-SCE-3232118">
    <property type="pathway name" value="SUMOylation of transcription factors"/>
</dbReference>
<dbReference type="Reactome" id="R-SCE-3899300">
    <property type="pathway name" value="SUMOylation of transcription cofactors"/>
</dbReference>
<dbReference type="Reactome" id="R-SCE-4085377">
    <property type="pathway name" value="SUMOylation of SUMOylation proteins"/>
</dbReference>
<dbReference type="Reactome" id="R-SCE-4551638">
    <property type="pathway name" value="SUMOylation of chromatin organization proteins"/>
</dbReference>
<dbReference type="Reactome" id="R-SCE-4570464">
    <property type="pathway name" value="SUMOylation of RNA binding proteins"/>
</dbReference>
<dbReference type="Reactome" id="R-SCE-4615885">
    <property type="pathway name" value="SUMOylation of DNA replication proteins"/>
</dbReference>
<dbReference type="Reactome" id="R-SCE-5693565">
    <property type="pathway name" value="Recruitment and ATM-mediated phosphorylation of repair and signaling proteins at DNA double strand breaks"/>
</dbReference>
<dbReference type="Reactome" id="R-SCE-9615933">
    <property type="pathway name" value="Postmitotic nuclear pore complex (NPC) reformation"/>
</dbReference>
<dbReference type="Reactome" id="R-SCE-9793242">
    <property type="pathway name" value="SUMOylation of nuclear envelope proteins"/>
</dbReference>
<dbReference type="Reactome" id="R-SCE-9856649">
    <property type="pathway name" value="Transcriptional and post-translational regulation of MITF-M expression and activity"/>
</dbReference>
<dbReference type="UniPathway" id="UPA00886"/>
<dbReference type="BioGRID-ORCS" id="851495">
    <property type="hits" value="10 hits in 10 CRISPR screens"/>
</dbReference>
<dbReference type="CD-CODE" id="E03F929F">
    <property type="entry name" value="Stress granule"/>
</dbReference>
<dbReference type="EvolutionaryTrace" id="P50623"/>
<dbReference type="PRO" id="PR:P50623"/>
<dbReference type="Proteomes" id="UP000002311">
    <property type="component" value="Chromosome IV"/>
</dbReference>
<dbReference type="RNAct" id="P50623">
    <property type="molecule type" value="protein"/>
</dbReference>
<dbReference type="GO" id="GO:0000794">
    <property type="term" value="C:condensed nuclear chromosome"/>
    <property type="evidence" value="ECO:0000314"/>
    <property type="project" value="SGD"/>
</dbReference>
<dbReference type="GO" id="GO:0005634">
    <property type="term" value="C:nucleus"/>
    <property type="evidence" value="ECO:0000314"/>
    <property type="project" value="SGD"/>
</dbReference>
<dbReference type="GO" id="GO:0005524">
    <property type="term" value="F:ATP binding"/>
    <property type="evidence" value="ECO:0007669"/>
    <property type="project" value="UniProtKB-KW"/>
</dbReference>
<dbReference type="GO" id="GO:0061656">
    <property type="term" value="F:SUMO conjugating enzyme activity"/>
    <property type="evidence" value="ECO:0000318"/>
    <property type="project" value="GO_Central"/>
</dbReference>
<dbReference type="GO" id="GO:0019789">
    <property type="term" value="F:SUMO transferase activity"/>
    <property type="evidence" value="ECO:0000314"/>
    <property type="project" value="SGD"/>
</dbReference>
<dbReference type="GO" id="GO:0051301">
    <property type="term" value="P:cell division"/>
    <property type="evidence" value="ECO:0007669"/>
    <property type="project" value="UniProtKB-KW"/>
</dbReference>
<dbReference type="GO" id="GO:0000022">
    <property type="term" value="P:mitotic spindle elongation"/>
    <property type="evidence" value="ECO:0000315"/>
    <property type="project" value="SGD"/>
</dbReference>
<dbReference type="GO" id="GO:0016925">
    <property type="term" value="P:protein sumoylation"/>
    <property type="evidence" value="ECO:0000314"/>
    <property type="project" value="SGD"/>
</dbReference>
<dbReference type="CDD" id="cd23798">
    <property type="entry name" value="UBCc_UBE2I"/>
    <property type="match status" value="1"/>
</dbReference>
<dbReference type="FunFam" id="3.10.110.10:FF:000035">
    <property type="entry name" value="SUMO-conjugating enzyme ubc9"/>
    <property type="match status" value="1"/>
</dbReference>
<dbReference type="Gene3D" id="3.10.110.10">
    <property type="entry name" value="Ubiquitin Conjugating Enzyme"/>
    <property type="match status" value="1"/>
</dbReference>
<dbReference type="InterPro" id="IPR050113">
    <property type="entry name" value="Ub_conjugating_enzyme"/>
</dbReference>
<dbReference type="InterPro" id="IPR000608">
    <property type="entry name" value="UBQ-conjugat_E2_core"/>
</dbReference>
<dbReference type="InterPro" id="IPR023313">
    <property type="entry name" value="UBQ-conjugating_AS"/>
</dbReference>
<dbReference type="InterPro" id="IPR016135">
    <property type="entry name" value="UBQ-conjugating_enzyme/RWD"/>
</dbReference>
<dbReference type="PANTHER" id="PTHR24067">
    <property type="entry name" value="UBIQUITIN-CONJUGATING ENZYME E2"/>
    <property type="match status" value="1"/>
</dbReference>
<dbReference type="Pfam" id="PF00179">
    <property type="entry name" value="UQ_con"/>
    <property type="match status" value="1"/>
</dbReference>
<dbReference type="SMART" id="SM00212">
    <property type="entry name" value="UBCc"/>
    <property type="match status" value="1"/>
</dbReference>
<dbReference type="SUPFAM" id="SSF54495">
    <property type="entry name" value="UBC-like"/>
    <property type="match status" value="1"/>
</dbReference>
<dbReference type="PROSITE" id="PS00183">
    <property type="entry name" value="UBC_1"/>
    <property type="match status" value="1"/>
</dbReference>
<dbReference type="PROSITE" id="PS50127">
    <property type="entry name" value="UBC_2"/>
    <property type="match status" value="1"/>
</dbReference>